<accession>P29397</accession>
<dbReference type="EMBL" id="Z11839">
    <property type="protein sequence ID" value="CAA77858.1"/>
    <property type="molecule type" value="Genomic_DNA"/>
</dbReference>
<dbReference type="EMBL" id="AE000512">
    <property type="protein sequence ID" value="AAD35536.1"/>
    <property type="status" value="ALT_INIT"/>
    <property type="molecule type" value="Genomic_DNA"/>
</dbReference>
<dbReference type="PIR" id="F72375">
    <property type="entry name" value="F72375"/>
</dbReference>
<dbReference type="RefSeq" id="NP_228263.1">
    <property type="nucleotide sequence ID" value="NC_000853.1"/>
</dbReference>
<dbReference type="RefSeq" id="WP_004081513.1">
    <property type="nucleotide sequence ID" value="NZ_CP011107.1"/>
</dbReference>
<dbReference type="PDB" id="2LQ8">
    <property type="method" value="NMR"/>
    <property type="chains" value="A=1-41, A=230-353"/>
</dbReference>
<dbReference type="PDB" id="2XHA">
    <property type="method" value="X-ray"/>
    <property type="resolution" value="1.91 A"/>
    <property type="chains" value="A/B=41-233"/>
</dbReference>
<dbReference type="PDB" id="2XHC">
    <property type="method" value="X-ray"/>
    <property type="resolution" value="2.45 A"/>
    <property type="chains" value="A=1-352"/>
</dbReference>
<dbReference type="PDBsum" id="2LQ8"/>
<dbReference type="PDBsum" id="2XHA"/>
<dbReference type="PDBsum" id="2XHC"/>
<dbReference type="SMR" id="P29397"/>
<dbReference type="STRING" id="243274.TM_0453"/>
<dbReference type="PaxDb" id="243274-THEMA_02425"/>
<dbReference type="EnsemblBacteria" id="AAD35536">
    <property type="protein sequence ID" value="AAD35536"/>
    <property type="gene ID" value="TM_0453"/>
</dbReference>
<dbReference type="KEGG" id="tma:TM0453"/>
<dbReference type="KEGG" id="tmi:THEMA_02425"/>
<dbReference type="KEGG" id="tmm:Tmari_0450"/>
<dbReference type="KEGG" id="tmw:THMA_0463"/>
<dbReference type="PATRIC" id="fig|243274.5.peg.459"/>
<dbReference type="eggNOG" id="COG0250">
    <property type="taxonomic scope" value="Bacteria"/>
</dbReference>
<dbReference type="InParanoid" id="P29397"/>
<dbReference type="OrthoDB" id="9809075at2"/>
<dbReference type="EvolutionaryTrace" id="P29397"/>
<dbReference type="Proteomes" id="UP000008183">
    <property type="component" value="Chromosome"/>
</dbReference>
<dbReference type="GO" id="GO:0005829">
    <property type="term" value="C:cytosol"/>
    <property type="evidence" value="ECO:0000318"/>
    <property type="project" value="GO_Central"/>
</dbReference>
<dbReference type="GO" id="GO:0006353">
    <property type="term" value="P:DNA-templated transcription termination"/>
    <property type="evidence" value="ECO:0007669"/>
    <property type="project" value="UniProtKB-UniRule"/>
</dbReference>
<dbReference type="GO" id="GO:0032784">
    <property type="term" value="P:regulation of DNA-templated transcription elongation"/>
    <property type="evidence" value="ECO:0007669"/>
    <property type="project" value="InterPro"/>
</dbReference>
<dbReference type="GO" id="GO:0031564">
    <property type="term" value="P:transcription antitermination"/>
    <property type="evidence" value="ECO:0007669"/>
    <property type="project" value="UniProtKB-UniRule"/>
</dbReference>
<dbReference type="GO" id="GO:0140673">
    <property type="term" value="P:transcription elongation-coupled chromatin remodeling"/>
    <property type="evidence" value="ECO:0007669"/>
    <property type="project" value="InterPro"/>
</dbReference>
<dbReference type="CDD" id="cd06091">
    <property type="entry name" value="KOW_NusG"/>
    <property type="match status" value="1"/>
</dbReference>
<dbReference type="FunFam" id="2.30.30.30:FF:000002">
    <property type="entry name" value="Transcription termination/antitermination factor NusG"/>
    <property type="match status" value="1"/>
</dbReference>
<dbReference type="Gene3D" id="2.30.30.30">
    <property type="match status" value="1"/>
</dbReference>
<dbReference type="Gene3D" id="3.30.70.940">
    <property type="entry name" value="NusG, N-terminal domain"/>
    <property type="match status" value="2"/>
</dbReference>
<dbReference type="HAMAP" id="MF_00948">
    <property type="entry name" value="NusG"/>
    <property type="match status" value="1"/>
</dbReference>
<dbReference type="InterPro" id="IPR005824">
    <property type="entry name" value="KOW"/>
</dbReference>
<dbReference type="InterPro" id="IPR006645">
    <property type="entry name" value="NGN-like_dom"/>
</dbReference>
<dbReference type="InterPro" id="IPR036735">
    <property type="entry name" value="NGN_dom_sf"/>
</dbReference>
<dbReference type="InterPro" id="IPR043425">
    <property type="entry name" value="NusG-like"/>
</dbReference>
<dbReference type="InterPro" id="IPR040473">
    <property type="entry name" value="NusG_add"/>
</dbReference>
<dbReference type="InterPro" id="IPR014722">
    <property type="entry name" value="Rib_uL2_dom2"/>
</dbReference>
<dbReference type="InterPro" id="IPR001062">
    <property type="entry name" value="Transcrpt_antiterm_NusG"/>
</dbReference>
<dbReference type="InterPro" id="IPR015869">
    <property type="entry name" value="Transcrpt_antiterm_NusG_bac_CS"/>
</dbReference>
<dbReference type="InterPro" id="IPR008991">
    <property type="entry name" value="Translation_prot_SH3-like_sf"/>
</dbReference>
<dbReference type="NCBIfam" id="TIGR00922">
    <property type="entry name" value="nusG"/>
    <property type="match status" value="1"/>
</dbReference>
<dbReference type="PANTHER" id="PTHR30265">
    <property type="entry name" value="RHO-INTERACTING TRANSCRIPTION TERMINATION FACTOR NUSG"/>
    <property type="match status" value="1"/>
</dbReference>
<dbReference type="PANTHER" id="PTHR30265:SF2">
    <property type="entry name" value="TRANSCRIPTION TERMINATION_ANTITERMINATION PROTEIN NUSG"/>
    <property type="match status" value="1"/>
</dbReference>
<dbReference type="Pfam" id="PF00467">
    <property type="entry name" value="KOW"/>
    <property type="match status" value="1"/>
</dbReference>
<dbReference type="Pfam" id="PF02357">
    <property type="entry name" value="NusG"/>
    <property type="match status" value="2"/>
</dbReference>
<dbReference type="Pfam" id="PF18298">
    <property type="entry name" value="NusG_add"/>
    <property type="match status" value="1"/>
</dbReference>
<dbReference type="PRINTS" id="PR00338">
    <property type="entry name" value="NUSGTNSCPFCT"/>
</dbReference>
<dbReference type="SMART" id="SM00739">
    <property type="entry name" value="KOW"/>
    <property type="match status" value="1"/>
</dbReference>
<dbReference type="SMART" id="SM00738">
    <property type="entry name" value="NGN"/>
    <property type="match status" value="1"/>
</dbReference>
<dbReference type="SUPFAM" id="SSF82679">
    <property type="entry name" value="N-utilization substance G protein NusG, N-terminal domain"/>
    <property type="match status" value="2"/>
</dbReference>
<dbReference type="SUPFAM" id="SSF50104">
    <property type="entry name" value="Translation proteins SH3-like domain"/>
    <property type="match status" value="1"/>
</dbReference>
<dbReference type="PROSITE" id="PS01014">
    <property type="entry name" value="NUSG"/>
    <property type="match status" value="1"/>
</dbReference>
<keyword id="KW-0002">3D-structure</keyword>
<keyword id="KW-1185">Reference proteome</keyword>
<keyword id="KW-0804">Transcription</keyword>
<keyword id="KW-0889">Transcription antitermination</keyword>
<keyword id="KW-0805">Transcription regulation</keyword>
<keyword id="KW-0806">Transcription termination</keyword>
<evidence type="ECO:0000255" key="1">
    <source>
        <dbReference type="HAMAP-Rule" id="MF_00948"/>
    </source>
</evidence>
<evidence type="ECO:0000269" key="2">
    <source>
    </source>
</evidence>
<evidence type="ECO:0000305" key="3"/>
<evidence type="ECO:0007829" key="4">
    <source>
        <dbReference type="PDB" id="2XHA"/>
    </source>
</evidence>
<evidence type="ECO:0007829" key="5">
    <source>
        <dbReference type="PDB" id="2XHC"/>
    </source>
</evidence>
<gene>
    <name evidence="1" type="primary">nusG</name>
    <name type="ordered locus">TM_0453</name>
</gene>
<proteinExistence type="evidence at protein level"/>
<reference key="1">
    <citation type="journal article" date="1992" name="J. Biol. Chem.">
        <title>The organization and expression of essential transcription translation component genes in the extremely thermophilic eubacterium Thermotoga maritima.</title>
        <authorList>
            <person name="Liao D."/>
            <person name="Dennis P.P."/>
        </authorList>
    </citation>
    <scope>NUCLEOTIDE SEQUENCE [GENOMIC DNA]</scope>
    <source>
        <strain>ATCC 43589 / DSM 3109 / JCM 10099 / NBRC 100826 / MSB8</strain>
    </source>
</reference>
<reference key="2">
    <citation type="journal article" date="1999" name="Nature">
        <title>Evidence for lateral gene transfer between Archaea and Bacteria from genome sequence of Thermotoga maritima.</title>
        <authorList>
            <person name="Nelson K.E."/>
            <person name="Clayton R.A."/>
            <person name="Gill S.R."/>
            <person name="Gwinn M.L."/>
            <person name="Dodson R.J."/>
            <person name="Haft D.H."/>
            <person name="Hickey E.K."/>
            <person name="Peterson J.D."/>
            <person name="Nelson W.C."/>
            <person name="Ketchum K.A."/>
            <person name="McDonald L.A."/>
            <person name="Utterback T.R."/>
            <person name="Malek J.A."/>
            <person name="Linher K.D."/>
            <person name="Garrett M.M."/>
            <person name="Stewart A.M."/>
            <person name="Cotton M.D."/>
            <person name="Pratt M.S."/>
            <person name="Phillips C.A."/>
            <person name="Richardson D.L."/>
            <person name="Heidelberg J.F."/>
            <person name="Sutton G.G."/>
            <person name="Fleischmann R.D."/>
            <person name="Eisen J.A."/>
            <person name="White O."/>
            <person name="Salzberg S.L."/>
            <person name="Smith H.O."/>
            <person name="Venter J.C."/>
            <person name="Fraser C.M."/>
        </authorList>
    </citation>
    <scope>NUCLEOTIDE SEQUENCE [LARGE SCALE GENOMIC DNA]</scope>
    <source>
        <strain>ATCC 43589 / DSM 3109 / JCM 10099 / NBRC 100826 / MSB8</strain>
    </source>
</reference>
<reference key="3">
    <citation type="submission" date="2010-06" db="PDB data bank">
        <title>Crystal structure of the antitermination factor Nusg from Thermotoga maritima.</title>
        <authorList>
            <person name="Stegmann C.M."/>
            <person name="Mandal A."/>
            <person name="Schweimer C."/>
            <person name="Burmann B."/>
            <person name="Roesch P."/>
            <person name="Wahl M.C."/>
        </authorList>
    </citation>
    <scope>X-RAY CRYSTALLOGRAPHY (2.45 ANGSTROMS) OF 1-352</scope>
</reference>
<reference key="4">
    <citation type="journal article" date="2013" name="Structure">
        <title>An autoinhibited state in the structure of Thermotoga maritima NusG.</title>
        <authorList>
            <person name="Drogemuller J."/>
            <person name="Stegmann C.M."/>
            <person name="Mandal A."/>
            <person name="Steiner T."/>
            <person name="Burmann B.M."/>
            <person name="Gottesman M.E."/>
            <person name="Wohrl B.M."/>
            <person name="Rosch P."/>
            <person name="Wahl M.C."/>
            <person name="Schweimer K."/>
        </authorList>
    </citation>
    <scope>STRUCTURE BY NMR</scope>
    <scope>ACTIVITY REGULATION</scope>
    <scope>DOMAIN</scope>
</reference>
<name>NUSG_THEMA</name>
<protein>
    <recommendedName>
        <fullName evidence="1">Transcription termination/antitermination protein NusG</fullName>
    </recommendedName>
</protein>
<feature type="chain" id="PRO_0000113965" description="Transcription termination/antitermination protein NusG">
    <location>
        <begin position="1"/>
        <end position="353"/>
    </location>
</feature>
<feature type="domain" description="KOW" evidence="1">
    <location>
        <begin position="301"/>
        <end position="335"/>
    </location>
</feature>
<feature type="strand" evidence="5">
    <location>
        <begin position="4"/>
        <end position="9"/>
    </location>
</feature>
<feature type="helix" evidence="5">
    <location>
        <begin position="15"/>
        <end position="29"/>
    </location>
</feature>
<feature type="strand" evidence="5">
    <location>
        <begin position="33"/>
        <end position="39"/>
    </location>
</feature>
<feature type="strand" evidence="5">
    <location>
        <begin position="42"/>
        <end position="46"/>
    </location>
</feature>
<feature type="strand" evidence="4">
    <location>
        <begin position="52"/>
        <end position="57"/>
    </location>
</feature>
<feature type="strand" evidence="4">
    <location>
        <begin position="62"/>
        <end position="64"/>
    </location>
</feature>
<feature type="strand" evidence="4">
    <location>
        <begin position="76"/>
        <end position="80"/>
    </location>
</feature>
<feature type="strand" evidence="4">
    <location>
        <begin position="89"/>
        <end position="103"/>
    </location>
</feature>
<feature type="strand" evidence="4">
    <location>
        <begin position="110"/>
        <end position="116"/>
    </location>
</feature>
<feature type="helix" evidence="4">
    <location>
        <begin position="117"/>
        <end position="119"/>
    </location>
</feature>
<feature type="strand" evidence="4">
    <location>
        <begin position="135"/>
        <end position="138"/>
    </location>
</feature>
<feature type="strand" evidence="4">
    <location>
        <begin position="147"/>
        <end position="163"/>
    </location>
</feature>
<feature type="strand" evidence="4">
    <location>
        <begin position="169"/>
        <end position="175"/>
    </location>
</feature>
<feature type="helix" evidence="4">
    <location>
        <begin position="176"/>
        <end position="178"/>
    </location>
</feature>
<feature type="turn" evidence="4">
    <location>
        <begin position="181"/>
        <end position="183"/>
    </location>
</feature>
<feature type="strand" evidence="4">
    <location>
        <begin position="195"/>
        <end position="197"/>
    </location>
</feature>
<feature type="strand" evidence="4">
    <location>
        <begin position="200"/>
        <end position="203"/>
    </location>
</feature>
<feature type="strand" evidence="4">
    <location>
        <begin position="208"/>
        <end position="214"/>
    </location>
</feature>
<feature type="strand" evidence="4">
    <location>
        <begin position="219"/>
        <end position="224"/>
    </location>
</feature>
<feature type="strand" evidence="5">
    <location>
        <begin position="226"/>
        <end position="232"/>
    </location>
</feature>
<feature type="strand" evidence="5">
    <location>
        <begin position="235"/>
        <end position="240"/>
    </location>
</feature>
<feature type="helix" evidence="5">
    <location>
        <begin position="244"/>
        <end position="251"/>
    </location>
</feature>
<feature type="strand" evidence="5">
    <location>
        <begin position="262"/>
        <end position="265"/>
    </location>
</feature>
<feature type="helix" evidence="5">
    <location>
        <begin position="271"/>
        <end position="280"/>
    </location>
</feature>
<feature type="strand" evidence="5">
    <location>
        <begin position="304"/>
        <end position="307"/>
    </location>
</feature>
<feature type="turn" evidence="5">
    <location>
        <begin position="311"/>
        <end position="314"/>
    </location>
</feature>
<feature type="strand" evidence="5">
    <location>
        <begin position="316"/>
        <end position="323"/>
    </location>
</feature>
<feature type="turn" evidence="5">
    <location>
        <begin position="324"/>
        <end position="327"/>
    </location>
</feature>
<feature type="strand" evidence="5">
    <location>
        <begin position="328"/>
        <end position="335"/>
    </location>
</feature>
<feature type="strand" evidence="5">
    <location>
        <begin position="338"/>
        <end position="345"/>
    </location>
</feature>
<feature type="helix" evidence="5">
    <location>
        <begin position="346"/>
        <end position="348"/>
    </location>
</feature>
<organism>
    <name type="scientific">Thermotoga maritima (strain ATCC 43589 / DSM 3109 / JCM 10099 / NBRC 100826 / MSB8)</name>
    <dbReference type="NCBI Taxonomy" id="243274"/>
    <lineage>
        <taxon>Bacteria</taxon>
        <taxon>Thermotogati</taxon>
        <taxon>Thermotogota</taxon>
        <taxon>Thermotogae</taxon>
        <taxon>Thermotogales</taxon>
        <taxon>Thermotogaceae</taxon>
        <taxon>Thermotoga</taxon>
    </lineage>
</organism>
<comment type="function">
    <text evidence="1">Participates in transcription elongation, termination and antitermination.</text>
</comment>
<comment type="activity regulation">
    <text evidence="2">Regulated by autoinhibition via interaction of the N-terminal and the C-terminal domains. Autoinhibition may prevent NusG from interacting prematurely with other components of the transcription complex or non-specific interactions with other cellular components.</text>
</comment>
<comment type="domain">
    <text evidence="2">The N-terminal domain interacts with RNAP and the C-terminal domain binds either to Rho or to RpsJ (NusE). Contains an additional, species-specific domain inserted into the N-terminal domain. The N-terminal and C-terminal domains can interact and form a closed conformation.</text>
</comment>
<comment type="similarity">
    <text evidence="1">Belongs to the NusG family.</text>
</comment>
<comment type="sequence caution" evidence="3">
    <conflict type="erroneous initiation">
        <sequence resource="EMBL-CDS" id="AAD35536"/>
    </conflict>
</comment>
<sequence length="353" mass="40327">MKKKWYIVLTMSGYEEKVKENIEKKVEATGIKNLVGRIVIPEEVVLDATSPSERLILSPKAKLHVNNGKDVNKGDLIAEEPPIYARRSGVIVDVKNVRKIVVETIDRKYTKTYYIPESAGIEPGLRVGTKVKQGLPLSKNEEYICELDGKIVEIERMKKVVVQTPDGEQDVYYIPLDVFDRDRIKKGKEVKQGEMLAEARKFFAKVSGRVEVVDYSTRKEIRIYKTKRRKLFPGYVFVEMIMNDEAYNFVRSVPYVMGFVSSGGQPVPVKDREMRPILRLAGLEEYEEKKKPVKVELGFKVGDMVKIISGPFEDFAGVIKEIDPERQELKVNVTIFGRETPVVLHVSEVEKIE</sequence>